<protein>
    <recommendedName>
        <fullName>Putative 8-amino-7-oxononanoate synthase</fullName>
        <shortName>AONS</shortName>
        <ecNumber>2.3.1.47</ecNumber>
    </recommendedName>
    <alternativeName>
        <fullName>7-keto-8-amino-pelargonic acid synthase</fullName>
        <shortName>7-KAP synthase</shortName>
    </alternativeName>
    <alternativeName>
        <fullName>8-amino-7-ketopelargonate synthase</fullName>
    </alternativeName>
</protein>
<organism>
    <name type="scientific">Bacillus mycoides (strain KBAB4)</name>
    <name type="common">Bacillus weihenstephanensis</name>
    <dbReference type="NCBI Taxonomy" id="315730"/>
    <lineage>
        <taxon>Bacteria</taxon>
        <taxon>Bacillati</taxon>
        <taxon>Bacillota</taxon>
        <taxon>Bacilli</taxon>
        <taxon>Bacillales</taxon>
        <taxon>Bacillaceae</taxon>
        <taxon>Bacillus</taxon>
        <taxon>Bacillus cereus group</taxon>
    </lineage>
</organism>
<dbReference type="EC" id="2.3.1.47"/>
<dbReference type="EMBL" id="CP000903">
    <property type="protein sequence ID" value="ABY45116.1"/>
    <property type="molecule type" value="Genomic_DNA"/>
</dbReference>
<dbReference type="RefSeq" id="WP_012261667.1">
    <property type="nucleotide sequence ID" value="NC_010184.1"/>
</dbReference>
<dbReference type="SMR" id="A9VG56"/>
<dbReference type="KEGG" id="bwe:BcerKBAB4_3949"/>
<dbReference type="eggNOG" id="COG0156">
    <property type="taxonomic scope" value="Bacteria"/>
</dbReference>
<dbReference type="HOGENOM" id="CLU_015846_11_2_9"/>
<dbReference type="UniPathway" id="UPA00078"/>
<dbReference type="Proteomes" id="UP000002154">
    <property type="component" value="Chromosome"/>
</dbReference>
<dbReference type="GO" id="GO:0008710">
    <property type="term" value="F:8-amino-7-oxononanoate synthase activity"/>
    <property type="evidence" value="ECO:0007669"/>
    <property type="project" value="UniProtKB-EC"/>
</dbReference>
<dbReference type="GO" id="GO:0030170">
    <property type="term" value="F:pyridoxal phosphate binding"/>
    <property type="evidence" value="ECO:0007669"/>
    <property type="project" value="InterPro"/>
</dbReference>
<dbReference type="GO" id="GO:0009102">
    <property type="term" value="P:biotin biosynthetic process"/>
    <property type="evidence" value="ECO:0007669"/>
    <property type="project" value="UniProtKB-UniPathway"/>
</dbReference>
<dbReference type="CDD" id="cd06454">
    <property type="entry name" value="KBL_like"/>
    <property type="match status" value="1"/>
</dbReference>
<dbReference type="FunFam" id="3.40.640.10:FF:000006">
    <property type="entry name" value="5-aminolevulinate synthase, mitochondrial"/>
    <property type="match status" value="1"/>
</dbReference>
<dbReference type="Gene3D" id="3.90.1150.10">
    <property type="entry name" value="Aspartate Aminotransferase, domain 1"/>
    <property type="match status" value="1"/>
</dbReference>
<dbReference type="Gene3D" id="3.40.640.10">
    <property type="entry name" value="Type I PLP-dependent aspartate aminotransferase-like (Major domain)"/>
    <property type="match status" value="1"/>
</dbReference>
<dbReference type="InterPro" id="IPR001917">
    <property type="entry name" value="Aminotrans_II_pyridoxalP_BS"/>
</dbReference>
<dbReference type="InterPro" id="IPR004839">
    <property type="entry name" value="Aminotransferase_I/II_large"/>
</dbReference>
<dbReference type="InterPro" id="IPR050087">
    <property type="entry name" value="AON_synthase_class-II"/>
</dbReference>
<dbReference type="InterPro" id="IPR004723">
    <property type="entry name" value="AONS_Archaea/Proteobacteria"/>
</dbReference>
<dbReference type="InterPro" id="IPR015424">
    <property type="entry name" value="PyrdxlP-dep_Trfase"/>
</dbReference>
<dbReference type="InterPro" id="IPR015421">
    <property type="entry name" value="PyrdxlP-dep_Trfase_major"/>
</dbReference>
<dbReference type="InterPro" id="IPR015422">
    <property type="entry name" value="PyrdxlP-dep_Trfase_small"/>
</dbReference>
<dbReference type="NCBIfam" id="TIGR00858">
    <property type="entry name" value="bioF"/>
    <property type="match status" value="1"/>
</dbReference>
<dbReference type="PANTHER" id="PTHR13693:SF100">
    <property type="entry name" value="8-AMINO-7-OXONONANOATE SYNTHASE"/>
    <property type="match status" value="1"/>
</dbReference>
<dbReference type="PANTHER" id="PTHR13693">
    <property type="entry name" value="CLASS II AMINOTRANSFERASE/8-AMINO-7-OXONONANOATE SYNTHASE"/>
    <property type="match status" value="1"/>
</dbReference>
<dbReference type="Pfam" id="PF00155">
    <property type="entry name" value="Aminotran_1_2"/>
    <property type="match status" value="1"/>
</dbReference>
<dbReference type="SUPFAM" id="SSF53383">
    <property type="entry name" value="PLP-dependent transferases"/>
    <property type="match status" value="1"/>
</dbReference>
<dbReference type="PROSITE" id="PS00599">
    <property type="entry name" value="AA_TRANSFER_CLASS_2"/>
    <property type="match status" value="1"/>
</dbReference>
<sequence>MNQMWRTHLQSKVEQLKEQGQYRNLHVTEKAEETWLIRNEKRMLNLASNNYLGLAGDERLKEAAIACTRKYGTGATASRLVVGNYPLYEEVERSICDWKGTERALIVNSGYTANVGAISALACRHDMIFSDKLNHASIVDGIILSGAEHKRYRHNDLDHLEKMLQIASPEKRKLIVTDTVFSMDGDIAYLRGLVQLKEKYGAIIIVDEAHASGIYGIGGAGLSHVEKDIAQKIDIHMGTFSKALGCYGAYLTGDSIYIEYLQNMMRSLIFTTALPPGTLGAIRKAIEIVKEDNERRERLIENGAYFRTHLQEAGFDIGNSSTHIVPIVVGSNENTLRFSERLQEVGIAAIAIRPPTVPVGSSRVRFAVTSQHTIADLKWAIQHIIRIGKEEGFLV</sequence>
<gene>
    <name type="primary">bioF</name>
    <name type="ordered locus">BcerKBAB4_3949</name>
</gene>
<proteinExistence type="inferred from homology"/>
<accession>A9VG56</accession>
<feature type="chain" id="PRO_0000380921" description="Putative 8-amino-7-oxononanoate synthase">
    <location>
        <begin position="1"/>
        <end position="395"/>
    </location>
</feature>
<feature type="binding site" evidence="1">
    <location>
        <position position="23"/>
    </location>
    <ligand>
        <name>substrate</name>
    </ligand>
</feature>
<feature type="binding site" evidence="1">
    <location>
        <begin position="110"/>
        <end position="111"/>
    </location>
    <ligand>
        <name>pyridoxal 5'-phosphate</name>
        <dbReference type="ChEBI" id="CHEBI:597326"/>
    </ligand>
</feature>
<feature type="binding site" evidence="1">
    <location>
        <position position="135"/>
    </location>
    <ligand>
        <name>substrate</name>
    </ligand>
</feature>
<feature type="binding site" evidence="1">
    <location>
        <position position="182"/>
    </location>
    <ligand>
        <name>pyridoxal 5'-phosphate</name>
        <dbReference type="ChEBI" id="CHEBI:597326"/>
    </ligand>
</feature>
<feature type="binding site" evidence="1">
    <location>
        <begin position="207"/>
        <end position="210"/>
    </location>
    <ligand>
        <name>pyridoxal 5'-phosphate</name>
        <dbReference type="ChEBI" id="CHEBI:597326"/>
    </ligand>
</feature>
<feature type="binding site" evidence="1">
    <location>
        <begin position="239"/>
        <end position="242"/>
    </location>
    <ligand>
        <name>pyridoxal 5'-phosphate</name>
        <dbReference type="ChEBI" id="CHEBI:597326"/>
    </ligand>
</feature>
<feature type="binding site" evidence="1">
    <location>
        <position position="356"/>
    </location>
    <ligand>
        <name>substrate</name>
    </ligand>
</feature>
<feature type="modified residue" description="N6-(pyridoxal phosphate)lysine" evidence="1">
    <location>
        <position position="242"/>
    </location>
</feature>
<comment type="function">
    <text evidence="1">Catalyzes the decarboxylative condensation of pimeloyl-[acyl-carrier protein] and L-alanine to produce 8-amino-7-oxononanoate (AON), [acyl-carrier protein], and carbon dioxide.</text>
</comment>
<comment type="catalytic activity">
    <reaction>
        <text>6-carboxyhexanoyl-[ACP] + L-alanine + H(+) = (8S)-8-amino-7-oxononanoate + holo-[ACP] + CO2</text>
        <dbReference type="Rhea" id="RHEA:42288"/>
        <dbReference type="Rhea" id="RHEA-COMP:9685"/>
        <dbReference type="Rhea" id="RHEA-COMP:9955"/>
        <dbReference type="ChEBI" id="CHEBI:15378"/>
        <dbReference type="ChEBI" id="CHEBI:16526"/>
        <dbReference type="ChEBI" id="CHEBI:57972"/>
        <dbReference type="ChEBI" id="CHEBI:64479"/>
        <dbReference type="ChEBI" id="CHEBI:78846"/>
        <dbReference type="ChEBI" id="CHEBI:149468"/>
        <dbReference type="EC" id="2.3.1.47"/>
    </reaction>
</comment>
<comment type="cofactor">
    <cofactor evidence="1">
        <name>pyridoxal 5'-phosphate</name>
        <dbReference type="ChEBI" id="CHEBI:597326"/>
    </cofactor>
</comment>
<comment type="pathway">
    <text>Cofactor biosynthesis; biotin biosynthesis.</text>
</comment>
<comment type="subunit">
    <text evidence="1">Homodimer.</text>
</comment>
<comment type="similarity">
    <text evidence="2">Belongs to the class-II pyridoxal-phosphate-dependent aminotransferase family. BioF subfamily.</text>
</comment>
<name>BIOF_BACMK</name>
<keyword id="KW-0093">Biotin biosynthesis</keyword>
<keyword id="KW-0663">Pyridoxal phosphate</keyword>
<keyword id="KW-0808">Transferase</keyword>
<reference key="1">
    <citation type="journal article" date="2008" name="Chem. Biol. Interact.">
        <title>Extending the Bacillus cereus group genomics to putative food-borne pathogens of different toxicity.</title>
        <authorList>
            <person name="Lapidus A."/>
            <person name="Goltsman E."/>
            <person name="Auger S."/>
            <person name="Galleron N."/>
            <person name="Segurens B."/>
            <person name="Dossat C."/>
            <person name="Land M.L."/>
            <person name="Broussolle V."/>
            <person name="Brillard J."/>
            <person name="Guinebretiere M.-H."/>
            <person name="Sanchis V."/>
            <person name="Nguen-the C."/>
            <person name="Lereclus D."/>
            <person name="Richardson P."/>
            <person name="Wincker P."/>
            <person name="Weissenbach J."/>
            <person name="Ehrlich S.D."/>
            <person name="Sorokin A."/>
        </authorList>
    </citation>
    <scope>NUCLEOTIDE SEQUENCE [LARGE SCALE GENOMIC DNA]</scope>
    <source>
        <strain>KBAB4</strain>
    </source>
</reference>
<evidence type="ECO:0000250" key="1"/>
<evidence type="ECO:0000305" key="2"/>